<evidence type="ECO:0000255" key="1">
    <source>
        <dbReference type="HAMAP-Rule" id="MF_01368"/>
    </source>
</evidence>
<evidence type="ECO:0000256" key="2">
    <source>
        <dbReference type="SAM" id="MobiDB-lite"/>
    </source>
</evidence>
<evidence type="ECO:0000305" key="3"/>
<dbReference type="EMBL" id="AP009493">
    <property type="protein sequence ID" value="BAG19635.1"/>
    <property type="molecule type" value="Genomic_DNA"/>
</dbReference>
<dbReference type="RefSeq" id="WP_003966936.1">
    <property type="nucleotide sequence ID" value="NC_010572.1"/>
</dbReference>
<dbReference type="SMR" id="B1W3X9"/>
<dbReference type="KEGG" id="sgr:SGR_2806"/>
<dbReference type="eggNOG" id="COG0203">
    <property type="taxonomic scope" value="Bacteria"/>
</dbReference>
<dbReference type="HOGENOM" id="CLU_074407_0_0_11"/>
<dbReference type="Proteomes" id="UP000001685">
    <property type="component" value="Chromosome"/>
</dbReference>
<dbReference type="GO" id="GO:0022625">
    <property type="term" value="C:cytosolic large ribosomal subunit"/>
    <property type="evidence" value="ECO:0007669"/>
    <property type="project" value="TreeGrafter"/>
</dbReference>
<dbReference type="GO" id="GO:0003735">
    <property type="term" value="F:structural constituent of ribosome"/>
    <property type="evidence" value="ECO:0007669"/>
    <property type="project" value="InterPro"/>
</dbReference>
<dbReference type="GO" id="GO:0006412">
    <property type="term" value="P:translation"/>
    <property type="evidence" value="ECO:0007669"/>
    <property type="project" value="UniProtKB-UniRule"/>
</dbReference>
<dbReference type="FunFam" id="3.90.1030.10:FF:000001">
    <property type="entry name" value="50S ribosomal protein L17"/>
    <property type="match status" value="1"/>
</dbReference>
<dbReference type="Gene3D" id="3.90.1030.10">
    <property type="entry name" value="Ribosomal protein L17"/>
    <property type="match status" value="1"/>
</dbReference>
<dbReference type="HAMAP" id="MF_01368">
    <property type="entry name" value="Ribosomal_bL17"/>
    <property type="match status" value="1"/>
</dbReference>
<dbReference type="InterPro" id="IPR000456">
    <property type="entry name" value="Ribosomal_bL17"/>
</dbReference>
<dbReference type="InterPro" id="IPR047859">
    <property type="entry name" value="Ribosomal_bL17_CS"/>
</dbReference>
<dbReference type="InterPro" id="IPR036373">
    <property type="entry name" value="Ribosomal_bL17_sf"/>
</dbReference>
<dbReference type="NCBIfam" id="TIGR00059">
    <property type="entry name" value="L17"/>
    <property type="match status" value="1"/>
</dbReference>
<dbReference type="PANTHER" id="PTHR14413:SF16">
    <property type="entry name" value="LARGE RIBOSOMAL SUBUNIT PROTEIN BL17M"/>
    <property type="match status" value="1"/>
</dbReference>
<dbReference type="PANTHER" id="PTHR14413">
    <property type="entry name" value="RIBOSOMAL PROTEIN L17"/>
    <property type="match status" value="1"/>
</dbReference>
<dbReference type="Pfam" id="PF01196">
    <property type="entry name" value="Ribosomal_L17"/>
    <property type="match status" value="1"/>
</dbReference>
<dbReference type="SUPFAM" id="SSF64263">
    <property type="entry name" value="Prokaryotic ribosomal protein L17"/>
    <property type="match status" value="1"/>
</dbReference>
<dbReference type="PROSITE" id="PS01167">
    <property type="entry name" value="RIBOSOMAL_L17"/>
    <property type="match status" value="1"/>
</dbReference>
<organism>
    <name type="scientific">Streptomyces griseus subsp. griseus (strain JCM 4626 / CBS 651.72 / NBRC 13350 / KCC S-0626 / ISP 5235)</name>
    <dbReference type="NCBI Taxonomy" id="455632"/>
    <lineage>
        <taxon>Bacteria</taxon>
        <taxon>Bacillati</taxon>
        <taxon>Actinomycetota</taxon>
        <taxon>Actinomycetes</taxon>
        <taxon>Kitasatosporales</taxon>
        <taxon>Streptomycetaceae</taxon>
        <taxon>Streptomyces</taxon>
    </lineage>
</organism>
<proteinExistence type="inferred from homology"/>
<protein>
    <recommendedName>
        <fullName evidence="1">Large ribosomal subunit protein bL17</fullName>
    </recommendedName>
    <alternativeName>
        <fullName evidence="3">50S ribosomal protein L17</fullName>
    </alternativeName>
</protein>
<sequence>MPRPAKGARLGGSAAHEKLLLANLAKSLFEHGRITTTEAKARRLRPVAERLVTKAKKGDIHNRRLVLQTITDKSVVHTLFTEIAPRYENRPGGYTRITKIGNRRGDNAPMAVIELVEALTVAQQATGEAEAATKRAVKEDALKKDEAPAAESVEDAKPAEDAPAAEAADDKGKDA</sequence>
<gene>
    <name evidence="1" type="primary">rplQ</name>
    <name type="ordered locus">SGR_2806</name>
</gene>
<comment type="subunit">
    <text evidence="1">Part of the 50S ribosomal subunit. Contacts protein L32.</text>
</comment>
<comment type="similarity">
    <text evidence="1">Belongs to the bacterial ribosomal protein bL17 family.</text>
</comment>
<name>RL17_STRGG</name>
<feature type="chain" id="PRO_1000144487" description="Large ribosomal subunit protein bL17">
    <location>
        <begin position="1"/>
        <end position="175"/>
    </location>
</feature>
<feature type="region of interest" description="Disordered" evidence="2">
    <location>
        <begin position="127"/>
        <end position="175"/>
    </location>
</feature>
<feature type="compositionally biased region" description="Basic and acidic residues" evidence="2">
    <location>
        <begin position="131"/>
        <end position="147"/>
    </location>
</feature>
<keyword id="KW-0687">Ribonucleoprotein</keyword>
<keyword id="KW-0689">Ribosomal protein</keyword>
<accession>B1W3X9</accession>
<reference key="1">
    <citation type="journal article" date="2008" name="J. Bacteriol.">
        <title>Genome sequence of the streptomycin-producing microorganism Streptomyces griseus IFO 13350.</title>
        <authorList>
            <person name="Ohnishi Y."/>
            <person name="Ishikawa J."/>
            <person name="Hara H."/>
            <person name="Suzuki H."/>
            <person name="Ikenoya M."/>
            <person name="Ikeda H."/>
            <person name="Yamashita A."/>
            <person name="Hattori M."/>
            <person name="Horinouchi S."/>
        </authorList>
    </citation>
    <scope>NUCLEOTIDE SEQUENCE [LARGE SCALE GENOMIC DNA]</scope>
    <source>
        <strain>JCM 4626 / CBS 651.72 / NBRC 13350 / KCC S-0626 / ISP 5235</strain>
    </source>
</reference>